<evidence type="ECO:0000255" key="1">
    <source>
        <dbReference type="HAMAP-Rule" id="MF_00120"/>
    </source>
</evidence>
<sequence length="485" mass="52295">MSLFDHSVSELHKKLNNKEISVTDLVEESYKRIADVEDNVKAFLTLDEENARAKAKELDAKIGAEDNGLLFGMPIGVKDNIVTNGLRTTCASKILANFDPIYDATVVQKLKAADTITIGKLNMDEFAMGSSNENSGFYATKNPWNLDYVPGGSSGGSAAAVAAGEVLFSLGSDTGGSIRQPAAYCGVVGLKPTYGRVSRYGLVAFASSLDQIGPITRTVEDNAYLLQAISGLDRMDATSANVEVGNYLAGLTGDVKGLRIAVPKEYLGEGVGEEARESVLAALKVLEGMGATWEEVSLPHSKYALATYYLLSSSEASANLSRFDGVRYGVRSDNVNNLMDLYKNTRSEGFGDEVKRRIMLGTFALSSGYYDAYYKKAQQVRTLIKNDFENVFANYDVIIGPTTPTPAFKVGEKVDDPMTMYANDILTIPVNLAGVPAISVPCGFGANNMPLGLQIIGKHFDEATIYRVAHAFEQATDHHTKKASL</sequence>
<feature type="chain" id="PRO_1000122464" description="Glutamyl-tRNA(Gln) amidotransferase subunit A">
    <location>
        <begin position="1"/>
        <end position="485"/>
    </location>
</feature>
<feature type="active site" description="Charge relay system" evidence="1">
    <location>
        <position position="78"/>
    </location>
</feature>
<feature type="active site" description="Charge relay system" evidence="1">
    <location>
        <position position="153"/>
    </location>
</feature>
<feature type="active site" description="Acyl-ester intermediate" evidence="1">
    <location>
        <position position="177"/>
    </location>
</feature>
<organism>
    <name type="scientific">Bacillus anthracis (strain CDC 684 / NRRL 3495)</name>
    <dbReference type="NCBI Taxonomy" id="568206"/>
    <lineage>
        <taxon>Bacteria</taxon>
        <taxon>Bacillati</taxon>
        <taxon>Bacillota</taxon>
        <taxon>Bacilli</taxon>
        <taxon>Bacillales</taxon>
        <taxon>Bacillaceae</taxon>
        <taxon>Bacillus</taxon>
        <taxon>Bacillus cereus group</taxon>
    </lineage>
</organism>
<name>GATA_BACAC</name>
<comment type="function">
    <text evidence="1">Allows the formation of correctly charged Gln-tRNA(Gln) through the transamidation of misacylated Glu-tRNA(Gln) in organisms which lack glutaminyl-tRNA synthetase. The reaction takes place in the presence of glutamine and ATP through an activated gamma-phospho-Glu-tRNA(Gln).</text>
</comment>
<comment type="catalytic activity">
    <reaction evidence="1">
        <text>L-glutamyl-tRNA(Gln) + L-glutamine + ATP + H2O = L-glutaminyl-tRNA(Gln) + L-glutamate + ADP + phosphate + H(+)</text>
        <dbReference type="Rhea" id="RHEA:17521"/>
        <dbReference type="Rhea" id="RHEA-COMP:9681"/>
        <dbReference type="Rhea" id="RHEA-COMP:9684"/>
        <dbReference type="ChEBI" id="CHEBI:15377"/>
        <dbReference type="ChEBI" id="CHEBI:15378"/>
        <dbReference type="ChEBI" id="CHEBI:29985"/>
        <dbReference type="ChEBI" id="CHEBI:30616"/>
        <dbReference type="ChEBI" id="CHEBI:43474"/>
        <dbReference type="ChEBI" id="CHEBI:58359"/>
        <dbReference type="ChEBI" id="CHEBI:78520"/>
        <dbReference type="ChEBI" id="CHEBI:78521"/>
        <dbReference type="ChEBI" id="CHEBI:456216"/>
        <dbReference type="EC" id="6.3.5.7"/>
    </reaction>
</comment>
<comment type="subunit">
    <text evidence="1">Heterotrimer of A, B and C subunits.</text>
</comment>
<comment type="similarity">
    <text evidence="1">Belongs to the amidase family. GatA subfamily.</text>
</comment>
<proteinExistence type="inferred from homology"/>
<accession>C3L559</accession>
<protein>
    <recommendedName>
        <fullName evidence="1">Glutamyl-tRNA(Gln) amidotransferase subunit A</fullName>
        <shortName evidence="1">Glu-ADT subunit A</shortName>
        <ecNumber evidence="1">6.3.5.7</ecNumber>
    </recommendedName>
</protein>
<gene>
    <name evidence="1" type="primary">gatA</name>
    <name type="ordered locus">BAMEG_0380</name>
</gene>
<dbReference type="EC" id="6.3.5.7" evidence="1"/>
<dbReference type="EMBL" id="CP001215">
    <property type="protein sequence ID" value="ACP12918.1"/>
    <property type="molecule type" value="Genomic_DNA"/>
</dbReference>
<dbReference type="RefSeq" id="WP_000051435.1">
    <property type="nucleotide sequence ID" value="NC_012581.1"/>
</dbReference>
<dbReference type="SMR" id="C3L559"/>
<dbReference type="GeneID" id="45020377"/>
<dbReference type="KEGG" id="bah:BAMEG_0380"/>
<dbReference type="HOGENOM" id="CLU_009600_0_3_9"/>
<dbReference type="GO" id="GO:0030956">
    <property type="term" value="C:glutamyl-tRNA(Gln) amidotransferase complex"/>
    <property type="evidence" value="ECO:0007669"/>
    <property type="project" value="InterPro"/>
</dbReference>
<dbReference type="GO" id="GO:0005524">
    <property type="term" value="F:ATP binding"/>
    <property type="evidence" value="ECO:0007669"/>
    <property type="project" value="UniProtKB-KW"/>
</dbReference>
<dbReference type="GO" id="GO:0050567">
    <property type="term" value="F:glutaminyl-tRNA synthase (glutamine-hydrolyzing) activity"/>
    <property type="evidence" value="ECO:0007669"/>
    <property type="project" value="UniProtKB-UniRule"/>
</dbReference>
<dbReference type="GO" id="GO:0006412">
    <property type="term" value="P:translation"/>
    <property type="evidence" value="ECO:0007669"/>
    <property type="project" value="UniProtKB-UniRule"/>
</dbReference>
<dbReference type="Gene3D" id="3.90.1300.10">
    <property type="entry name" value="Amidase signature (AS) domain"/>
    <property type="match status" value="1"/>
</dbReference>
<dbReference type="HAMAP" id="MF_00120">
    <property type="entry name" value="GatA"/>
    <property type="match status" value="1"/>
</dbReference>
<dbReference type="InterPro" id="IPR000120">
    <property type="entry name" value="Amidase"/>
</dbReference>
<dbReference type="InterPro" id="IPR020556">
    <property type="entry name" value="Amidase_CS"/>
</dbReference>
<dbReference type="InterPro" id="IPR023631">
    <property type="entry name" value="Amidase_dom"/>
</dbReference>
<dbReference type="InterPro" id="IPR036928">
    <property type="entry name" value="AS_sf"/>
</dbReference>
<dbReference type="InterPro" id="IPR004412">
    <property type="entry name" value="GatA"/>
</dbReference>
<dbReference type="NCBIfam" id="TIGR00132">
    <property type="entry name" value="gatA"/>
    <property type="match status" value="1"/>
</dbReference>
<dbReference type="PANTHER" id="PTHR11895:SF151">
    <property type="entry name" value="GLUTAMYL-TRNA(GLN) AMIDOTRANSFERASE SUBUNIT A"/>
    <property type="match status" value="1"/>
</dbReference>
<dbReference type="PANTHER" id="PTHR11895">
    <property type="entry name" value="TRANSAMIDASE"/>
    <property type="match status" value="1"/>
</dbReference>
<dbReference type="Pfam" id="PF01425">
    <property type="entry name" value="Amidase"/>
    <property type="match status" value="1"/>
</dbReference>
<dbReference type="SUPFAM" id="SSF75304">
    <property type="entry name" value="Amidase signature (AS) enzymes"/>
    <property type="match status" value="1"/>
</dbReference>
<dbReference type="PROSITE" id="PS00571">
    <property type="entry name" value="AMIDASES"/>
    <property type="match status" value="1"/>
</dbReference>
<keyword id="KW-0067">ATP-binding</keyword>
<keyword id="KW-0436">Ligase</keyword>
<keyword id="KW-0547">Nucleotide-binding</keyword>
<keyword id="KW-0648">Protein biosynthesis</keyword>
<reference key="1">
    <citation type="submission" date="2008-10" db="EMBL/GenBank/DDBJ databases">
        <title>Genome sequence of Bacillus anthracis str. CDC 684.</title>
        <authorList>
            <person name="Dodson R.J."/>
            <person name="Munk A.C."/>
            <person name="Brettin T."/>
            <person name="Bruce D."/>
            <person name="Detter C."/>
            <person name="Tapia R."/>
            <person name="Han C."/>
            <person name="Sutton G."/>
            <person name="Sims D."/>
        </authorList>
    </citation>
    <scope>NUCLEOTIDE SEQUENCE [LARGE SCALE GENOMIC DNA]</scope>
    <source>
        <strain>CDC 684 / NRRL 3495</strain>
    </source>
</reference>